<accession>B6I4M3</accession>
<dbReference type="EMBL" id="AP009240">
    <property type="protein sequence ID" value="BAG79693.1"/>
    <property type="molecule type" value="Genomic_DNA"/>
</dbReference>
<dbReference type="RefSeq" id="WP_000920762.1">
    <property type="nucleotide sequence ID" value="NC_011415.1"/>
</dbReference>
<dbReference type="KEGG" id="ecy:ECSE_4169"/>
<dbReference type="HOGENOM" id="CLU_032288_0_0_6"/>
<dbReference type="Proteomes" id="UP000008199">
    <property type="component" value="Chromosome"/>
</dbReference>
<dbReference type="GO" id="GO:0005886">
    <property type="term" value="C:plasma membrane"/>
    <property type="evidence" value="ECO:0007669"/>
    <property type="project" value="UniProtKB-SubCell"/>
</dbReference>
<dbReference type="HAMAP" id="MF_00672">
    <property type="entry name" value="UPF0761"/>
    <property type="match status" value="1"/>
</dbReference>
<dbReference type="InterPro" id="IPR023679">
    <property type="entry name" value="UPF0761_bac"/>
</dbReference>
<dbReference type="InterPro" id="IPR017039">
    <property type="entry name" value="Virul_fac_BrkB"/>
</dbReference>
<dbReference type="NCBIfam" id="NF002457">
    <property type="entry name" value="PRK01637.1"/>
    <property type="match status" value="1"/>
</dbReference>
<dbReference type="NCBIfam" id="TIGR00765">
    <property type="entry name" value="yihY_not_rbn"/>
    <property type="match status" value="1"/>
</dbReference>
<dbReference type="PANTHER" id="PTHR30213">
    <property type="entry name" value="INNER MEMBRANE PROTEIN YHJD"/>
    <property type="match status" value="1"/>
</dbReference>
<dbReference type="PANTHER" id="PTHR30213:SF0">
    <property type="entry name" value="UPF0761 MEMBRANE PROTEIN YIHY"/>
    <property type="match status" value="1"/>
</dbReference>
<dbReference type="Pfam" id="PF03631">
    <property type="entry name" value="Virul_fac_BrkB"/>
    <property type="match status" value="1"/>
</dbReference>
<dbReference type="PIRSF" id="PIRSF035875">
    <property type="entry name" value="RNase_BN"/>
    <property type="match status" value="1"/>
</dbReference>
<comment type="subcellular location">
    <subcellularLocation>
        <location evidence="1">Cell inner membrane</location>
        <topology evidence="1">Multi-pass membrane protein</topology>
    </subcellularLocation>
</comment>
<comment type="similarity">
    <text evidence="1">Belongs to the UPF0761 family.</text>
</comment>
<protein>
    <recommendedName>
        <fullName evidence="1">UPF0761 membrane protein YihY</fullName>
    </recommendedName>
</protein>
<feature type="chain" id="PRO_1000131552" description="UPF0761 membrane protein YihY">
    <location>
        <begin position="1"/>
        <end position="290"/>
    </location>
</feature>
<feature type="transmembrane region" description="Helical" evidence="1">
    <location>
        <begin position="44"/>
        <end position="64"/>
    </location>
</feature>
<feature type="transmembrane region" description="Helical" evidence="1">
    <location>
        <begin position="104"/>
        <end position="124"/>
    </location>
</feature>
<feature type="transmembrane region" description="Helical" evidence="1">
    <location>
        <begin position="140"/>
        <end position="160"/>
    </location>
</feature>
<feature type="transmembrane region" description="Helical" evidence="1">
    <location>
        <begin position="183"/>
        <end position="203"/>
    </location>
</feature>
<feature type="transmembrane region" description="Helical" evidence="1">
    <location>
        <begin position="210"/>
        <end position="230"/>
    </location>
</feature>
<feature type="transmembrane region" description="Helical" evidence="1">
    <location>
        <begin position="244"/>
        <end position="264"/>
    </location>
</feature>
<keyword id="KW-0997">Cell inner membrane</keyword>
<keyword id="KW-1003">Cell membrane</keyword>
<keyword id="KW-0472">Membrane</keyword>
<keyword id="KW-0812">Transmembrane</keyword>
<keyword id="KW-1133">Transmembrane helix</keyword>
<organism>
    <name type="scientific">Escherichia coli (strain SE11)</name>
    <dbReference type="NCBI Taxonomy" id="409438"/>
    <lineage>
        <taxon>Bacteria</taxon>
        <taxon>Pseudomonadati</taxon>
        <taxon>Pseudomonadota</taxon>
        <taxon>Gammaproteobacteria</taxon>
        <taxon>Enterobacterales</taxon>
        <taxon>Enterobacteriaceae</taxon>
        <taxon>Escherichia</taxon>
    </lineage>
</organism>
<evidence type="ECO:0000255" key="1">
    <source>
        <dbReference type="HAMAP-Rule" id="MF_00672"/>
    </source>
</evidence>
<proteinExistence type="inferred from homology"/>
<gene>
    <name evidence="1" type="primary">yihY</name>
    <name type="ordered locus">ECSE_4169</name>
</gene>
<name>YIHY_ECOSE</name>
<reference key="1">
    <citation type="journal article" date="2008" name="DNA Res.">
        <title>Complete genome sequence and comparative analysis of the wild-type commensal Escherichia coli strain SE11 isolated from a healthy adult.</title>
        <authorList>
            <person name="Oshima K."/>
            <person name="Toh H."/>
            <person name="Ogura Y."/>
            <person name="Sasamoto H."/>
            <person name="Morita H."/>
            <person name="Park S.-H."/>
            <person name="Ooka T."/>
            <person name="Iyoda S."/>
            <person name="Taylor T.D."/>
            <person name="Hayashi T."/>
            <person name="Itoh K."/>
            <person name="Hattori M."/>
        </authorList>
    </citation>
    <scope>NUCLEOTIDE SEQUENCE [LARGE SCALE GENOMIC DNA]</scope>
    <source>
        <strain>SE11</strain>
    </source>
</reference>
<sequence>MLKTIQDKARHRTRPLWAWLKLLWQRIDEDNMTTLAGNLAYVSLLSLVPLVAVVFALFAAFPMFSDVSIQLRHFIFANFLPATGDVIQRYIEQFVANSNKMTAVGACGLIVTALLLMYSIDSALNTIWRSKRARPKIYSFAVYWMILTLGPLLAGASLAISSYLLSLRWASDLNTVIDNVLRIFPLLLSWISFWLLYSIVPTIRVPNRDAIVGAFVAALLFEAGKKGFALYITMFPSYQLIYGVLAVIPILFVWVYWTWCIVLLGAEITVTLGEYRKLKQAAEQEEDDEP</sequence>